<dbReference type="GO" id="GO:0005576">
    <property type="term" value="C:extracellular region"/>
    <property type="evidence" value="ECO:0007669"/>
    <property type="project" value="UniProtKB-SubCell"/>
</dbReference>
<dbReference type="GO" id="GO:0090729">
    <property type="term" value="F:toxin activity"/>
    <property type="evidence" value="ECO:0007669"/>
    <property type="project" value="UniProtKB-KW"/>
</dbReference>
<name>TXE1A_ETHRU</name>
<organism>
    <name type="scientific">Ethmostigmus rubripes</name>
    <name type="common">Giant centipede</name>
    <dbReference type="NCBI Taxonomy" id="62613"/>
    <lineage>
        <taxon>Eukaryota</taxon>
        <taxon>Metazoa</taxon>
        <taxon>Ecdysozoa</taxon>
        <taxon>Arthropoda</taxon>
        <taxon>Myriapoda</taxon>
        <taxon>Chilopoda</taxon>
        <taxon>Pleurostigmophora</taxon>
        <taxon>Scolopendromorpha</taxon>
        <taxon>Scolopendridae</taxon>
        <taxon>Ethmostigmus</taxon>
    </lineage>
</organism>
<keyword id="KW-1015">Disulfide bond</keyword>
<keyword id="KW-0964">Secreted</keyword>
<keyword id="KW-0732">Signal</keyword>
<keyword id="KW-0800">Toxin</keyword>
<proteinExistence type="inferred from homology"/>
<comment type="subcellular location">
    <subcellularLocation>
        <location evidence="4">Secreted</location>
    </subcellularLocation>
</comment>
<comment type="tissue specificity">
    <text evidence="4">Expressed by the venom gland.</text>
</comment>
<comment type="PTM">
    <text evidence="3">Contains 4 disulfide bonds.</text>
</comment>
<comment type="similarity">
    <text evidence="3">Belongs to the scoloptoxin-14 family.</text>
</comment>
<comment type="online information" name="National Center for Biotechnology Information (NCBI)">
    <link uri="https://www.ncbi.nlm.nih.gov/nuccore/GASI01000125"/>
</comment>
<feature type="signal peptide" evidence="1">
    <location>
        <begin position="1"/>
        <end position="23"/>
    </location>
</feature>
<feature type="chain" id="PRO_0000446785" description="U-scoloptoxin(14)-Er1a" evidence="3">
    <location>
        <begin position="24"/>
        <end position="64"/>
    </location>
</feature>
<protein>
    <recommendedName>
        <fullName evidence="2">U-scoloptoxin(14)-Er1a</fullName>
        <shortName evidence="2">U-SLPTX(14)-Er1a</shortName>
    </recommendedName>
</protein>
<sequence>MRPSFPLLLIMLLVCTAHHMVSGENAQSCTPEQQKTCKQYSCINPCCENNQCRCGCGILEGESK</sequence>
<reference key="1">
    <citation type="journal article" date="2014" name="Mol. Biol. Evol.">
        <title>Clawing through evolution: toxin diversification and convergence in the ancient lineage Chilopoda (centipedes).</title>
        <authorList>
            <person name="Undheim E.A."/>
            <person name="Jones A."/>
            <person name="Clauser K.R."/>
            <person name="Holland J.W."/>
            <person name="Pineda S.S."/>
            <person name="King G.F."/>
            <person name="Fry B.G."/>
        </authorList>
    </citation>
    <scope>NUCLEOTIDE SEQUENCE [MRNA]</scope>
    <scope>NOMENCLATURE</scope>
    <source>
        <tissue>Venom gland</tissue>
    </source>
</reference>
<evidence type="ECO:0000255" key="1"/>
<evidence type="ECO:0000303" key="2">
    <source>
    </source>
</evidence>
<evidence type="ECO:0000305" key="3"/>
<evidence type="ECO:0000305" key="4">
    <source>
    </source>
</evidence>
<accession>P0DQB4</accession>